<organism>
    <name type="scientific">Pseudomonas savastanoi pv. phaseolicola (strain 1448A / Race 6)</name>
    <name type="common">Pseudomonas syringae pv. phaseolicola (strain 1448A / Race 6)</name>
    <dbReference type="NCBI Taxonomy" id="264730"/>
    <lineage>
        <taxon>Bacteria</taxon>
        <taxon>Pseudomonadati</taxon>
        <taxon>Pseudomonadota</taxon>
        <taxon>Gammaproteobacteria</taxon>
        <taxon>Pseudomonadales</taxon>
        <taxon>Pseudomonadaceae</taxon>
        <taxon>Pseudomonas</taxon>
    </lineage>
</organism>
<reference key="1">
    <citation type="journal article" date="2005" name="J. Bacteriol.">
        <title>Whole-genome sequence analysis of Pseudomonas syringae pv. phaseolicola 1448A reveals divergence among pathovars in genes involved in virulence and transposition.</title>
        <authorList>
            <person name="Joardar V."/>
            <person name="Lindeberg M."/>
            <person name="Jackson R.W."/>
            <person name="Selengut J."/>
            <person name="Dodson R."/>
            <person name="Brinkac L.M."/>
            <person name="Daugherty S.C."/>
            <person name="DeBoy R.T."/>
            <person name="Durkin A.S."/>
            <person name="Gwinn Giglio M."/>
            <person name="Madupu R."/>
            <person name="Nelson W.C."/>
            <person name="Rosovitz M.J."/>
            <person name="Sullivan S.A."/>
            <person name="Crabtree J."/>
            <person name="Creasy T."/>
            <person name="Davidsen T.M."/>
            <person name="Haft D.H."/>
            <person name="Zafar N."/>
            <person name="Zhou L."/>
            <person name="Halpin R."/>
            <person name="Holley T."/>
            <person name="Khouri H.M."/>
            <person name="Feldblyum T.V."/>
            <person name="White O."/>
            <person name="Fraser C.M."/>
            <person name="Chatterjee A.K."/>
            <person name="Cartinhour S."/>
            <person name="Schneider D."/>
            <person name="Mansfield J.W."/>
            <person name="Collmer A."/>
            <person name="Buell R."/>
        </authorList>
    </citation>
    <scope>NUCLEOTIDE SEQUENCE [LARGE SCALE GENOMIC DNA]</scope>
    <source>
        <strain>1448A / Race 6</strain>
    </source>
</reference>
<comment type="function">
    <text evidence="1">Bifunctional enzyme that catalyzes the oxidative decarboxylation of UDP-glucuronic acid (UDP-GlcUA) to UDP-4-keto-arabinose (UDP-Ara4O) and the addition of a formyl group to UDP-4-amino-4-deoxy-L-arabinose (UDP-L-Ara4N) to form UDP-L-4-formamido-arabinose (UDP-L-Ara4FN). The modified arabinose is attached to lipid A and is required for resistance to polymyxin and cationic antimicrobial peptides.</text>
</comment>
<comment type="catalytic activity">
    <reaction evidence="1">
        <text>UDP-alpha-D-glucuronate + NAD(+) = UDP-beta-L-threo-pentopyranos-4-ulose + CO2 + NADH</text>
        <dbReference type="Rhea" id="RHEA:24702"/>
        <dbReference type="ChEBI" id="CHEBI:16526"/>
        <dbReference type="ChEBI" id="CHEBI:57540"/>
        <dbReference type="ChEBI" id="CHEBI:57945"/>
        <dbReference type="ChEBI" id="CHEBI:58052"/>
        <dbReference type="ChEBI" id="CHEBI:58710"/>
        <dbReference type="EC" id="1.1.1.305"/>
    </reaction>
</comment>
<comment type="catalytic activity">
    <reaction evidence="1">
        <text>UDP-4-amino-4-deoxy-beta-L-arabinose + (6R)-10-formyltetrahydrofolate = UDP-4-deoxy-4-formamido-beta-L-arabinose + (6S)-5,6,7,8-tetrahydrofolate + H(+)</text>
        <dbReference type="Rhea" id="RHEA:24706"/>
        <dbReference type="ChEBI" id="CHEBI:15378"/>
        <dbReference type="ChEBI" id="CHEBI:57453"/>
        <dbReference type="ChEBI" id="CHEBI:58708"/>
        <dbReference type="ChEBI" id="CHEBI:58709"/>
        <dbReference type="ChEBI" id="CHEBI:195366"/>
        <dbReference type="EC" id="2.1.2.13"/>
    </reaction>
</comment>
<comment type="pathway">
    <text evidence="1">Nucleotide-sugar biosynthesis; UDP-4-deoxy-4-formamido-beta-L-arabinose biosynthesis; UDP-4-deoxy-4-formamido-beta-L-arabinose from UDP-alpha-D-glucuronate: step 1/3.</text>
</comment>
<comment type="pathway">
    <text evidence="1">Nucleotide-sugar biosynthesis; UDP-4-deoxy-4-formamido-beta-L-arabinose biosynthesis; UDP-4-deoxy-4-formamido-beta-L-arabinose from UDP-alpha-D-glucuronate: step 3/3.</text>
</comment>
<comment type="pathway">
    <text evidence="1">Bacterial outer membrane biogenesis; lipopolysaccharide biosynthesis.</text>
</comment>
<comment type="subunit">
    <text evidence="1">Homohexamer, formed by a dimer of trimers.</text>
</comment>
<comment type="similarity">
    <text evidence="1">In the N-terminal section; belongs to the Fmt family. UDP-L-Ara4N formyltransferase subfamily.</text>
</comment>
<comment type="similarity">
    <text evidence="1">In the C-terminal section; belongs to the NAD(P)-dependent epimerase/dehydratase family. UDP-glucuronic acid decarboxylase subfamily.</text>
</comment>
<proteinExistence type="inferred from homology"/>
<accession>Q48HZ1</accession>
<protein>
    <recommendedName>
        <fullName evidence="1">Bifunctional polymyxin resistance protein ArnA</fullName>
    </recommendedName>
    <domain>
        <recommendedName>
            <fullName evidence="1">UDP-4-amino-4-deoxy-L-arabinose formyltransferase</fullName>
            <ecNumber evidence="1">2.1.2.13</ecNumber>
        </recommendedName>
        <alternativeName>
            <fullName evidence="1">ArnAFT</fullName>
        </alternativeName>
        <alternativeName>
            <fullName evidence="1">UDP-L-Ara4N formyltransferase</fullName>
        </alternativeName>
    </domain>
    <domain>
        <recommendedName>
            <fullName evidence="1">UDP-glucuronic acid oxidase, UDP-4-keto-hexauronic acid decarboxylating</fullName>
            <ecNumber evidence="1">1.1.1.305</ecNumber>
        </recommendedName>
        <alternativeName>
            <fullName evidence="1">ArnADH</fullName>
        </alternativeName>
        <alternativeName>
            <fullName evidence="1">UDP-GlcUA decarboxylase</fullName>
        </alternativeName>
        <alternativeName>
            <fullName evidence="1">UDP-glucuronic acid dehydrogenase</fullName>
        </alternativeName>
    </domain>
</protein>
<sequence length="663" mass="73522">MSPKAVVFAYHDIGCVGLQALLGAGYEIAAVFTHADDPKEKTFFGSVAQLCARHGIPVHAPEDPNHPLWVERIDKLAPDFIFSFYYRQLLGDPLLACAKKGALNLHGSLLPRYRGRAPANWVLVNGESETGVTLHQMVKRADAGPIVAQQRVSISSTDTALTLHGKLREAAADLLSETLPLLALGQLSGTPQDETRASCFGRRTPADGLIDWSLPATQLYNLIRAVTQPYPGAFCAVGENKLIVWAASAEAGNNGEAPGTVISHDPLRIACGEGSLVINAGQRGDNGLYLSGAQLAREFGLVEGSQLLDTEKRRPARRTRVLILGVNGFIGNHLSERLLQDDRYDIYGMDIGSDAIERLRTKPNFHFIEGDISIHTEWIEYHIKKCDVVLPLVAIATPIEYTRNPLRVFELDFEENLKIVRYCVKYNKRVIFPSTSEVYGMCQDASFNEDTSNLIVGPINKQRWIYSVSKQLLDRVIWAYGQKGLQFTLFRPFNWMGPRLDRLDSARIGSSRAITQLILHLVEGTPIRLVDGGAQKRCFTDVADGIEALARIIENRDGCCNGQIINIGNPDNEASIRQLGEELLRQFEAHPLRGNFPPFAGFREVESQSFYGKGYQDVSHRKPSIDNARQLIGWTPGIELSETIGKTLDFFLREAMAEKADMR</sequence>
<feature type="chain" id="PRO_0000083102" description="Bifunctional polymyxin resistance protein ArnA">
    <location>
        <begin position="1"/>
        <end position="663"/>
    </location>
</feature>
<feature type="region of interest" description="Formyltransferase ArnAFT">
    <location>
        <begin position="1"/>
        <end position="307"/>
    </location>
</feature>
<feature type="region of interest" description="Dehydrogenase ArnADH">
    <location>
        <begin position="317"/>
        <end position="663"/>
    </location>
</feature>
<feature type="active site" description="Proton donor; for formyltransferase activity" evidence="1">
    <location>
        <position position="106"/>
    </location>
</feature>
<feature type="active site" description="Proton acceptor; for decarboxylase activity" evidence="1">
    <location>
        <position position="437"/>
    </location>
</feature>
<feature type="active site" description="Proton donor; for decarboxylase activity" evidence="1">
    <location>
        <position position="621"/>
    </location>
</feature>
<feature type="binding site" evidence="1">
    <location>
        <position position="116"/>
    </location>
    <ligand>
        <name>(6R)-10-formyltetrahydrofolate</name>
        <dbReference type="ChEBI" id="CHEBI:195366"/>
    </ligand>
</feature>
<feature type="binding site" evidence="1">
    <location>
        <begin position="138"/>
        <end position="142"/>
    </location>
    <ligand>
        <name>(6R)-10-formyltetrahydrofolate</name>
        <dbReference type="ChEBI" id="CHEBI:195366"/>
    </ligand>
</feature>
<feature type="binding site" evidence="1">
    <location>
        <position position="350"/>
    </location>
    <ligand>
        <name>NAD(+)</name>
        <dbReference type="ChEBI" id="CHEBI:57540"/>
    </ligand>
</feature>
<feature type="binding site" evidence="1">
    <location>
        <begin position="371"/>
        <end position="372"/>
    </location>
    <ligand>
        <name>NAD(+)</name>
        <dbReference type="ChEBI" id="CHEBI:57540"/>
    </ligand>
</feature>
<feature type="binding site" evidence="1">
    <location>
        <position position="396"/>
    </location>
    <ligand>
        <name>UDP-alpha-D-glucuronate</name>
        <dbReference type="ChEBI" id="CHEBI:58052"/>
    </ligand>
</feature>
<feature type="binding site" evidence="1">
    <location>
        <position position="401"/>
    </location>
    <ligand>
        <name>UDP-alpha-D-glucuronate</name>
        <dbReference type="ChEBI" id="CHEBI:58052"/>
    </ligand>
</feature>
<feature type="binding site" evidence="1">
    <location>
        <begin position="435"/>
        <end position="436"/>
    </location>
    <ligand>
        <name>UDP-alpha-D-glucuronate</name>
        <dbReference type="ChEBI" id="CHEBI:58052"/>
    </ligand>
</feature>
<feature type="binding site" evidence="1">
    <location>
        <position position="463"/>
    </location>
    <ligand>
        <name>UDP-alpha-D-glucuronate</name>
        <dbReference type="ChEBI" id="CHEBI:58052"/>
    </ligand>
</feature>
<feature type="binding site" evidence="1">
    <location>
        <position position="494"/>
    </location>
    <ligand>
        <name>UDP-alpha-D-glucuronate</name>
        <dbReference type="ChEBI" id="CHEBI:58052"/>
    </ligand>
</feature>
<feature type="binding site" evidence="1">
    <location>
        <begin position="528"/>
        <end position="537"/>
    </location>
    <ligand>
        <name>UDP-alpha-D-glucuronate</name>
        <dbReference type="ChEBI" id="CHEBI:58052"/>
    </ligand>
</feature>
<feature type="binding site" evidence="1">
    <location>
        <position position="615"/>
    </location>
    <ligand>
        <name>UDP-alpha-D-glucuronate</name>
        <dbReference type="ChEBI" id="CHEBI:58052"/>
    </ligand>
</feature>
<feature type="site" description="Transition state stabilizer" evidence="1">
    <location>
        <position position="104"/>
    </location>
</feature>
<feature type="site" description="Raises pKa of active site His" evidence="1">
    <location>
        <position position="142"/>
    </location>
</feature>
<gene>
    <name evidence="1" type="primary">arnA</name>
    <name type="ordered locus">PSPPH_2804</name>
</gene>
<name>ARNA_PSE14</name>
<evidence type="ECO:0000255" key="1">
    <source>
        <dbReference type="HAMAP-Rule" id="MF_01166"/>
    </source>
</evidence>
<keyword id="KW-0046">Antibiotic resistance</keyword>
<keyword id="KW-0441">Lipid A biosynthesis</keyword>
<keyword id="KW-0444">Lipid biosynthesis</keyword>
<keyword id="KW-0443">Lipid metabolism</keyword>
<keyword id="KW-0448">Lipopolysaccharide biosynthesis</keyword>
<keyword id="KW-0511">Multifunctional enzyme</keyword>
<keyword id="KW-0520">NAD</keyword>
<keyword id="KW-0560">Oxidoreductase</keyword>
<keyword id="KW-0808">Transferase</keyword>
<dbReference type="EC" id="2.1.2.13" evidence="1"/>
<dbReference type="EC" id="1.1.1.305" evidence="1"/>
<dbReference type="EMBL" id="CP000058">
    <property type="protein sequence ID" value="AAZ36393.1"/>
    <property type="molecule type" value="Genomic_DNA"/>
</dbReference>
<dbReference type="RefSeq" id="WP_011168795.1">
    <property type="nucleotide sequence ID" value="NC_005773.3"/>
</dbReference>
<dbReference type="SMR" id="Q48HZ1"/>
<dbReference type="KEGG" id="psp:PSPPH_2804"/>
<dbReference type="eggNOG" id="COG0223">
    <property type="taxonomic scope" value="Bacteria"/>
</dbReference>
<dbReference type="eggNOG" id="COG0451">
    <property type="taxonomic scope" value="Bacteria"/>
</dbReference>
<dbReference type="HOGENOM" id="CLU_007383_23_0_6"/>
<dbReference type="UniPathway" id="UPA00030"/>
<dbReference type="UniPathway" id="UPA00032">
    <property type="reaction ID" value="UER00492"/>
</dbReference>
<dbReference type="UniPathway" id="UPA00032">
    <property type="reaction ID" value="UER00494"/>
</dbReference>
<dbReference type="Proteomes" id="UP000000551">
    <property type="component" value="Chromosome"/>
</dbReference>
<dbReference type="GO" id="GO:0016020">
    <property type="term" value="C:membrane"/>
    <property type="evidence" value="ECO:0007669"/>
    <property type="project" value="GOC"/>
</dbReference>
<dbReference type="GO" id="GO:0016831">
    <property type="term" value="F:carboxy-lyase activity"/>
    <property type="evidence" value="ECO:0007669"/>
    <property type="project" value="InterPro"/>
</dbReference>
<dbReference type="GO" id="GO:0099619">
    <property type="term" value="F:UDP-4-amino-4-deoxy-L-arabinose formyltransferase activity"/>
    <property type="evidence" value="ECO:0007669"/>
    <property type="project" value="UniProtKB-EC"/>
</dbReference>
<dbReference type="GO" id="GO:0099618">
    <property type="term" value="F:UDP-glucuronate dehydrogenase activity"/>
    <property type="evidence" value="ECO:0007669"/>
    <property type="project" value="UniProtKB-EC"/>
</dbReference>
<dbReference type="GO" id="GO:0009245">
    <property type="term" value="P:lipid A biosynthetic process"/>
    <property type="evidence" value="ECO:0007669"/>
    <property type="project" value="UniProtKB-KW"/>
</dbReference>
<dbReference type="GO" id="GO:0009103">
    <property type="term" value="P:lipopolysaccharide biosynthetic process"/>
    <property type="evidence" value="ECO:0007669"/>
    <property type="project" value="UniProtKB-UniRule"/>
</dbReference>
<dbReference type="GO" id="GO:0046677">
    <property type="term" value="P:response to antibiotic"/>
    <property type="evidence" value="ECO:0007669"/>
    <property type="project" value="UniProtKB-KW"/>
</dbReference>
<dbReference type="CDD" id="cd08702">
    <property type="entry name" value="Arna_FMT_C"/>
    <property type="match status" value="1"/>
</dbReference>
<dbReference type="CDD" id="cd05257">
    <property type="entry name" value="Arna_like_SDR_e"/>
    <property type="match status" value="1"/>
</dbReference>
<dbReference type="FunFam" id="3.40.50.720:FF:000197">
    <property type="entry name" value="Bifunctional polymyxin resistance protein ArnA"/>
    <property type="match status" value="1"/>
</dbReference>
<dbReference type="Gene3D" id="3.40.50.12230">
    <property type="match status" value="1"/>
</dbReference>
<dbReference type="Gene3D" id="3.40.50.720">
    <property type="entry name" value="NAD(P)-binding Rossmann-like Domain"/>
    <property type="match status" value="1"/>
</dbReference>
<dbReference type="HAMAP" id="MF_01166">
    <property type="entry name" value="ArnA"/>
    <property type="match status" value="1"/>
</dbReference>
<dbReference type="InterPro" id="IPR045869">
    <property type="entry name" value="Arna-like_SDR_e"/>
</dbReference>
<dbReference type="InterPro" id="IPR021168">
    <property type="entry name" value="Bifun_polymyxin_resist_ArnA"/>
</dbReference>
<dbReference type="InterPro" id="IPR001509">
    <property type="entry name" value="Epimerase_deHydtase"/>
</dbReference>
<dbReference type="InterPro" id="IPR005793">
    <property type="entry name" value="Formyl_trans_C"/>
</dbReference>
<dbReference type="InterPro" id="IPR002376">
    <property type="entry name" value="Formyl_transf_N"/>
</dbReference>
<dbReference type="InterPro" id="IPR036477">
    <property type="entry name" value="Formyl_transf_N_sf"/>
</dbReference>
<dbReference type="InterPro" id="IPR011034">
    <property type="entry name" value="Formyl_transferase-like_C_sf"/>
</dbReference>
<dbReference type="InterPro" id="IPR050177">
    <property type="entry name" value="Lipid_A_modif_metabolic_enz"/>
</dbReference>
<dbReference type="InterPro" id="IPR036291">
    <property type="entry name" value="NAD(P)-bd_dom_sf"/>
</dbReference>
<dbReference type="NCBIfam" id="NF005414">
    <property type="entry name" value="PRK06988.1"/>
    <property type="match status" value="1"/>
</dbReference>
<dbReference type="NCBIfam" id="NF005998">
    <property type="entry name" value="PRK08125.1"/>
    <property type="match status" value="1"/>
</dbReference>
<dbReference type="NCBIfam" id="NF008872">
    <property type="entry name" value="PRK11908.1"/>
    <property type="match status" value="1"/>
</dbReference>
<dbReference type="PANTHER" id="PTHR43245">
    <property type="entry name" value="BIFUNCTIONAL POLYMYXIN RESISTANCE PROTEIN ARNA"/>
    <property type="match status" value="1"/>
</dbReference>
<dbReference type="PANTHER" id="PTHR43245:SF13">
    <property type="entry name" value="UDP-D-APIOSE_UDP-D-XYLOSE SYNTHASE 2"/>
    <property type="match status" value="1"/>
</dbReference>
<dbReference type="Pfam" id="PF01370">
    <property type="entry name" value="Epimerase"/>
    <property type="match status" value="1"/>
</dbReference>
<dbReference type="Pfam" id="PF02911">
    <property type="entry name" value="Formyl_trans_C"/>
    <property type="match status" value="1"/>
</dbReference>
<dbReference type="Pfam" id="PF00551">
    <property type="entry name" value="Formyl_trans_N"/>
    <property type="match status" value="1"/>
</dbReference>
<dbReference type="PIRSF" id="PIRSF036506">
    <property type="entry name" value="Bifun_polymyxin_resist_ArnA"/>
    <property type="match status" value="1"/>
</dbReference>
<dbReference type="SUPFAM" id="SSF50486">
    <property type="entry name" value="FMT C-terminal domain-like"/>
    <property type="match status" value="1"/>
</dbReference>
<dbReference type="SUPFAM" id="SSF53328">
    <property type="entry name" value="Formyltransferase"/>
    <property type="match status" value="1"/>
</dbReference>
<dbReference type="SUPFAM" id="SSF51735">
    <property type="entry name" value="NAD(P)-binding Rossmann-fold domains"/>
    <property type="match status" value="1"/>
</dbReference>